<protein>
    <recommendedName>
        <fullName evidence="1">Ribose-5-phosphate isomerase A</fullName>
        <ecNumber evidence="1">5.3.1.6</ecNumber>
    </recommendedName>
    <alternativeName>
        <fullName evidence="1">Phosphoriboisomerase A</fullName>
        <shortName evidence="1">PRI</shortName>
    </alternativeName>
</protein>
<feature type="chain" id="PRO_1000097687" description="Ribose-5-phosphate isomerase A">
    <location>
        <begin position="1"/>
        <end position="232"/>
    </location>
</feature>
<feature type="active site" description="Proton acceptor" evidence="1">
    <location>
        <position position="105"/>
    </location>
</feature>
<feature type="binding site" evidence="1">
    <location>
        <begin position="28"/>
        <end position="31"/>
    </location>
    <ligand>
        <name>substrate</name>
    </ligand>
</feature>
<feature type="binding site" evidence="1">
    <location>
        <begin position="83"/>
        <end position="86"/>
    </location>
    <ligand>
        <name>substrate</name>
    </ligand>
</feature>
<feature type="binding site" evidence="1">
    <location>
        <begin position="96"/>
        <end position="99"/>
    </location>
    <ligand>
        <name>substrate</name>
    </ligand>
</feature>
<feature type="binding site" evidence="1">
    <location>
        <position position="123"/>
    </location>
    <ligand>
        <name>substrate</name>
    </ligand>
</feature>
<proteinExistence type="inferred from homology"/>
<organism>
    <name type="scientific">Rhizobium leguminosarum bv. trifolii (strain WSM2304)</name>
    <dbReference type="NCBI Taxonomy" id="395492"/>
    <lineage>
        <taxon>Bacteria</taxon>
        <taxon>Pseudomonadati</taxon>
        <taxon>Pseudomonadota</taxon>
        <taxon>Alphaproteobacteria</taxon>
        <taxon>Hyphomicrobiales</taxon>
        <taxon>Rhizobiaceae</taxon>
        <taxon>Rhizobium/Agrobacterium group</taxon>
        <taxon>Rhizobium</taxon>
    </lineage>
</organism>
<accession>B5ZRL6</accession>
<evidence type="ECO:0000255" key="1">
    <source>
        <dbReference type="HAMAP-Rule" id="MF_00170"/>
    </source>
</evidence>
<comment type="function">
    <text evidence="1">Catalyzes the reversible conversion of ribose-5-phosphate to ribulose 5-phosphate.</text>
</comment>
<comment type="catalytic activity">
    <reaction evidence="1">
        <text>aldehydo-D-ribose 5-phosphate = D-ribulose 5-phosphate</text>
        <dbReference type="Rhea" id="RHEA:14657"/>
        <dbReference type="ChEBI" id="CHEBI:58121"/>
        <dbReference type="ChEBI" id="CHEBI:58273"/>
        <dbReference type="EC" id="5.3.1.6"/>
    </reaction>
</comment>
<comment type="pathway">
    <text evidence="1">Carbohydrate degradation; pentose phosphate pathway; D-ribose 5-phosphate from D-ribulose 5-phosphate (non-oxidative stage): step 1/1.</text>
</comment>
<comment type="subunit">
    <text evidence="1">Homodimer.</text>
</comment>
<comment type="similarity">
    <text evidence="1">Belongs to the ribose 5-phosphate isomerase family.</text>
</comment>
<keyword id="KW-0413">Isomerase</keyword>
<keyword id="KW-1185">Reference proteome</keyword>
<reference key="1">
    <citation type="journal article" date="2010" name="Stand. Genomic Sci.">
        <title>Complete genome sequence of Rhizobium leguminosarum bv trifolii strain WSM2304, an effective microsymbiont of the South American clover Trifolium polymorphum.</title>
        <authorList>
            <person name="Reeve W."/>
            <person name="O'Hara G."/>
            <person name="Chain P."/>
            <person name="Ardley J."/>
            <person name="Brau L."/>
            <person name="Nandesena K."/>
            <person name="Tiwari R."/>
            <person name="Malfatti S."/>
            <person name="Kiss H."/>
            <person name="Lapidus A."/>
            <person name="Copeland A."/>
            <person name="Nolan M."/>
            <person name="Land M."/>
            <person name="Ivanova N."/>
            <person name="Mavromatis K."/>
            <person name="Markowitz V."/>
            <person name="Kyrpides N."/>
            <person name="Melino V."/>
            <person name="Denton M."/>
            <person name="Yates R."/>
            <person name="Howieson J."/>
        </authorList>
    </citation>
    <scope>NUCLEOTIDE SEQUENCE [LARGE SCALE GENOMIC DNA]</scope>
    <source>
        <strain>WSM2304</strain>
    </source>
</reference>
<dbReference type="EC" id="5.3.1.6" evidence="1"/>
<dbReference type="EMBL" id="CP001191">
    <property type="protein sequence ID" value="ACI55297.1"/>
    <property type="molecule type" value="Genomic_DNA"/>
</dbReference>
<dbReference type="RefSeq" id="WP_012557870.1">
    <property type="nucleotide sequence ID" value="NC_011369.1"/>
</dbReference>
<dbReference type="SMR" id="B5ZRL6"/>
<dbReference type="STRING" id="395492.Rleg2_2013"/>
<dbReference type="KEGG" id="rlt:Rleg2_2013"/>
<dbReference type="eggNOG" id="COG0120">
    <property type="taxonomic scope" value="Bacteria"/>
</dbReference>
<dbReference type="HOGENOM" id="CLU_056590_1_0_5"/>
<dbReference type="UniPathway" id="UPA00115">
    <property type="reaction ID" value="UER00412"/>
</dbReference>
<dbReference type="Proteomes" id="UP000008330">
    <property type="component" value="Chromosome"/>
</dbReference>
<dbReference type="GO" id="GO:0004751">
    <property type="term" value="F:ribose-5-phosphate isomerase activity"/>
    <property type="evidence" value="ECO:0007669"/>
    <property type="project" value="UniProtKB-UniRule"/>
</dbReference>
<dbReference type="GO" id="GO:0009052">
    <property type="term" value="P:pentose-phosphate shunt, non-oxidative branch"/>
    <property type="evidence" value="ECO:0007669"/>
    <property type="project" value="UniProtKB-UniRule"/>
</dbReference>
<dbReference type="CDD" id="cd01398">
    <property type="entry name" value="RPI_A"/>
    <property type="match status" value="1"/>
</dbReference>
<dbReference type="FunFam" id="3.40.50.1360:FF:000001">
    <property type="entry name" value="Ribose-5-phosphate isomerase A"/>
    <property type="match status" value="1"/>
</dbReference>
<dbReference type="Gene3D" id="3.30.70.260">
    <property type="match status" value="1"/>
</dbReference>
<dbReference type="Gene3D" id="3.40.50.1360">
    <property type="match status" value="1"/>
</dbReference>
<dbReference type="HAMAP" id="MF_00170">
    <property type="entry name" value="Rib_5P_isom_A"/>
    <property type="match status" value="1"/>
</dbReference>
<dbReference type="InterPro" id="IPR037171">
    <property type="entry name" value="NagB/RpiA_transferase-like"/>
</dbReference>
<dbReference type="InterPro" id="IPR050262">
    <property type="entry name" value="Ribose-5P_isomerase"/>
</dbReference>
<dbReference type="InterPro" id="IPR020672">
    <property type="entry name" value="Ribose5P_isomerase_typA_subgr"/>
</dbReference>
<dbReference type="InterPro" id="IPR004788">
    <property type="entry name" value="Ribose5P_isomerase_type_A"/>
</dbReference>
<dbReference type="NCBIfam" id="NF001924">
    <property type="entry name" value="PRK00702.1"/>
    <property type="match status" value="1"/>
</dbReference>
<dbReference type="NCBIfam" id="TIGR00021">
    <property type="entry name" value="rpiA"/>
    <property type="match status" value="1"/>
</dbReference>
<dbReference type="PANTHER" id="PTHR43748">
    <property type="entry name" value="RIBOSE-5-PHOSPHATE ISOMERASE 3, CHLOROPLASTIC-RELATED"/>
    <property type="match status" value="1"/>
</dbReference>
<dbReference type="PANTHER" id="PTHR43748:SF3">
    <property type="entry name" value="RIBOSE-5-PHOSPHATE ISOMERASE 3, CHLOROPLASTIC-RELATED"/>
    <property type="match status" value="1"/>
</dbReference>
<dbReference type="Pfam" id="PF06026">
    <property type="entry name" value="Rib_5-P_isom_A"/>
    <property type="match status" value="1"/>
</dbReference>
<dbReference type="SUPFAM" id="SSF75445">
    <property type="entry name" value="D-ribose-5-phosphate isomerase (RpiA), lid domain"/>
    <property type="match status" value="1"/>
</dbReference>
<dbReference type="SUPFAM" id="SSF100950">
    <property type="entry name" value="NagB/RpiA/CoA transferase-like"/>
    <property type="match status" value="1"/>
</dbReference>
<sequence>MDAREMKIKAAAAALAHVEDGMRLGIGTGSTAEEFVRLLAEKVASGFKVEGVPTSERTARLCVELGVPLKSLDELPALDLTIDGADEVDPALRLIKGGGGALLREKIVAAASERMIVIADESKLVDTLGAYALPIEVNPFGLVSTRIAIEKVAARLGLAGELSLRQSGDGEFTTDGGHHIIDASFGRIPDAEALSSELNSIPGVVEHGLFINMAALAIIAGPAGARTLQANR</sequence>
<name>RPIA_RHILW</name>
<gene>
    <name evidence="1" type="primary">rpiA</name>
    <name type="ordered locus">Rleg2_2013</name>
</gene>